<feature type="chain" id="PRO_0000069057" description="Adrenocorticotropic hormone receptor">
    <location>
        <begin position="1" status="less than"/>
        <end position="126" status="greater than"/>
    </location>
</feature>
<feature type="transmembrane region" description="Helical; Name=1" evidence="1">
    <location>
        <begin position="1" status="less than"/>
        <end position="25"/>
    </location>
</feature>
<feature type="topological domain" description="Cytoplasmic" evidence="1">
    <location>
        <begin position="26"/>
        <end position="34"/>
    </location>
</feature>
<feature type="transmembrane region" description="Helical; Name=2" evidence="1">
    <location>
        <begin position="35"/>
        <end position="55"/>
    </location>
</feature>
<feature type="topological domain" description="Extracellular" evidence="1">
    <location>
        <begin position="56"/>
        <end position="80"/>
    </location>
</feature>
<feature type="transmembrane region" description="Helical; Name=3" evidence="1">
    <location>
        <begin position="81"/>
        <end position="102"/>
    </location>
</feature>
<feature type="topological domain" description="Cytoplasmic" evidence="1">
    <location>
        <begin position="103"/>
        <end position="123"/>
    </location>
</feature>
<feature type="transmembrane region" description="Helical; Name=4" evidence="1">
    <location>
        <begin position="124"/>
        <end position="126" status="greater than"/>
    </location>
</feature>
<feature type="non-terminal residue">
    <location>
        <position position="1"/>
    </location>
</feature>
<feature type="non-terminal residue">
    <location>
        <position position="126"/>
    </location>
</feature>
<dbReference type="EMBL" id="S81913">
    <property type="protein sequence ID" value="AAB36456.1"/>
    <property type="molecule type" value="mRNA"/>
</dbReference>
<dbReference type="SMR" id="Q28928"/>
<dbReference type="GO" id="GO:0005886">
    <property type="term" value="C:plasma membrane"/>
    <property type="evidence" value="ECO:0007669"/>
    <property type="project" value="UniProtKB-SubCell"/>
</dbReference>
<dbReference type="GO" id="GO:0004977">
    <property type="term" value="F:melanocortin receptor activity"/>
    <property type="evidence" value="ECO:0007669"/>
    <property type="project" value="InterPro"/>
</dbReference>
<dbReference type="GO" id="GO:0007189">
    <property type="term" value="P:adenylate cyclase-activating G protein-coupled receptor signaling pathway"/>
    <property type="evidence" value="ECO:0007669"/>
    <property type="project" value="UniProtKB-ARBA"/>
</dbReference>
<dbReference type="Gene3D" id="1.20.1070.10">
    <property type="entry name" value="Rhodopsin 7-helix transmembrane proteins"/>
    <property type="match status" value="1"/>
</dbReference>
<dbReference type="InterPro" id="IPR000276">
    <property type="entry name" value="GPCR_Rhodpsn"/>
</dbReference>
<dbReference type="InterPro" id="IPR017452">
    <property type="entry name" value="GPCR_Rhodpsn_7TM"/>
</dbReference>
<dbReference type="InterPro" id="IPR001671">
    <property type="entry name" value="Melcrt_ACTH_rcpt"/>
</dbReference>
<dbReference type="PANTHER" id="PTHR22750">
    <property type="entry name" value="G-PROTEIN COUPLED RECEPTOR"/>
    <property type="match status" value="1"/>
</dbReference>
<dbReference type="Pfam" id="PF00001">
    <property type="entry name" value="7tm_1"/>
    <property type="match status" value="1"/>
</dbReference>
<dbReference type="PRINTS" id="PR00237">
    <property type="entry name" value="GPCRRHODOPSN"/>
</dbReference>
<dbReference type="PRINTS" id="PR00534">
    <property type="entry name" value="MCRFAMILY"/>
</dbReference>
<dbReference type="SUPFAM" id="SSF81321">
    <property type="entry name" value="Family A G protein-coupled receptor-like"/>
    <property type="match status" value="1"/>
</dbReference>
<dbReference type="PROSITE" id="PS00237">
    <property type="entry name" value="G_PROTEIN_RECEP_F1_1"/>
    <property type="match status" value="1"/>
</dbReference>
<dbReference type="PROSITE" id="PS50262">
    <property type="entry name" value="G_PROTEIN_RECEP_F1_2"/>
    <property type="match status" value="1"/>
</dbReference>
<name>ACTHR_PAPHA</name>
<keyword id="KW-1003">Cell membrane</keyword>
<keyword id="KW-0297">G-protein coupled receptor</keyword>
<keyword id="KW-0472">Membrane</keyword>
<keyword id="KW-0675">Receptor</keyword>
<keyword id="KW-0807">Transducer</keyword>
<keyword id="KW-0812">Transmembrane</keyword>
<keyword id="KW-1133">Transmembrane helix</keyword>
<proteinExistence type="evidence at transcript level"/>
<reference key="1">
    <citation type="journal article" date="1996" name="Endocrinology">
        <title>Biphasic developmental expression of adrenocorticotropin receptor messenger ribonucleic acid levels in the baboon fetal adrenal gland.</title>
        <authorList>
            <person name="Albrecht E.D."/>
            <person name="Aberdeen G.W."/>
            <person name="Babischkin J.S."/>
            <person name="Tilly J.L."/>
            <person name="Pepe G.J."/>
        </authorList>
    </citation>
    <scope>NUCLEOTIDE SEQUENCE [MRNA]</scope>
    <source>
        <tissue>Adrenal cortex</tissue>
    </source>
</reference>
<accession>Q28928</accession>
<organism>
    <name type="scientific">Papio hamadryas</name>
    <name type="common">Hamadryas baboon</name>
    <dbReference type="NCBI Taxonomy" id="9557"/>
    <lineage>
        <taxon>Eukaryota</taxon>
        <taxon>Metazoa</taxon>
        <taxon>Chordata</taxon>
        <taxon>Craniata</taxon>
        <taxon>Vertebrata</taxon>
        <taxon>Euteleostomi</taxon>
        <taxon>Mammalia</taxon>
        <taxon>Eutheria</taxon>
        <taxon>Euarchontoglires</taxon>
        <taxon>Primates</taxon>
        <taxon>Haplorrhini</taxon>
        <taxon>Catarrhini</taxon>
        <taxon>Cercopithecidae</taxon>
        <taxon>Cercopithecinae</taxon>
        <taxon>Papio</taxon>
    </lineage>
</organism>
<evidence type="ECO:0000250" key="1"/>
<evidence type="ECO:0000255" key="2">
    <source>
        <dbReference type="PROSITE-ProRule" id="PRU00521"/>
    </source>
</evidence>
<gene>
    <name type="primary">MC2R</name>
</gene>
<sequence>VLPEEIFFTISIVGVLENLIVLLAVFKNKNLQAPMYFFICSLAISDMLGSLYKILENILIILRNMGYLKPRGSFETTADDIIDSLFVLSLLGAIFSLSVIAADRYITIFHALRYHSIVTMRRTVVV</sequence>
<comment type="function">
    <text>Receptor for corticotropin (ACTH). This receptor is mediated by G proteins (G(s)) which activate adenylate cyclase (cAMP).</text>
</comment>
<comment type="subunit">
    <text evidence="1">Interacts with MRAP; increasing ligand-sensitivity and generation of cAMP. Interacts with MRAP2; competing with MRAP for binding to MC2R and impairing the binding of corticotropin (ACTH) (By similarity).</text>
</comment>
<comment type="subcellular location">
    <subcellularLocation>
        <location>Cell membrane</location>
        <topology>Multi-pass membrane protein</topology>
    </subcellularLocation>
</comment>
<comment type="similarity">
    <text evidence="2">Belongs to the G-protein coupled receptor 1 family.</text>
</comment>
<protein>
    <recommendedName>
        <fullName>Adrenocorticotropic hormone receptor</fullName>
        <shortName>ACTH receptor</shortName>
        <shortName>ACTH-R</shortName>
    </recommendedName>
    <alternativeName>
        <fullName>Adrenocorticotropin receptor</fullName>
    </alternativeName>
    <alternativeName>
        <fullName>Melanocortin receptor 2</fullName>
        <shortName>MC2-R</shortName>
    </alternativeName>
</protein>